<organism>
    <name type="scientific">Drosophila melanogaster</name>
    <name type="common">Fruit fly</name>
    <dbReference type="NCBI Taxonomy" id="7227"/>
    <lineage>
        <taxon>Eukaryota</taxon>
        <taxon>Metazoa</taxon>
        <taxon>Ecdysozoa</taxon>
        <taxon>Arthropoda</taxon>
        <taxon>Hexapoda</taxon>
        <taxon>Insecta</taxon>
        <taxon>Pterygota</taxon>
        <taxon>Neoptera</taxon>
        <taxon>Endopterygota</taxon>
        <taxon>Diptera</taxon>
        <taxon>Brachycera</taxon>
        <taxon>Muscomorpha</taxon>
        <taxon>Ephydroidea</taxon>
        <taxon>Drosophilidae</taxon>
        <taxon>Drosophila</taxon>
        <taxon>Sophophora</taxon>
    </lineage>
</organism>
<reference key="1">
    <citation type="journal article" date="1986" name="Cell">
        <title>Gene within a gene: nested Drosophila genes encode unrelated proteins on opposite DNA strands.</title>
        <authorList>
            <person name="Henikoff S."/>
            <person name="Keene M.A."/>
            <person name="Fechtel K."/>
            <person name="Fristrom J.W."/>
        </authorList>
    </citation>
    <scope>NUCLEOTIDE SEQUENCE [GENOMIC DNA]</scope>
</reference>
<reference key="2">
    <citation type="journal article" date="1987" name="Genetics">
        <title>Conserved arrangement of nested genes at the Drosophila Gart locus.</title>
        <authorList>
            <person name="Henikoff S."/>
            <person name="Eghtedarzadeh M.K."/>
        </authorList>
    </citation>
    <scope>NUCLEOTIDE SEQUENCE [GENOMIC DNA]</scope>
    <source>
        <strain>Canton-S</strain>
    </source>
</reference>
<reference key="3">
    <citation type="journal article" date="2000" name="Science">
        <title>The genome sequence of Drosophila melanogaster.</title>
        <authorList>
            <person name="Adams M.D."/>
            <person name="Celniker S.E."/>
            <person name="Holt R.A."/>
            <person name="Evans C.A."/>
            <person name="Gocayne J.D."/>
            <person name="Amanatides P.G."/>
            <person name="Scherer S.E."/>
            <person name="Li P.W."/>
            <person name="Hoskins R.A."/>
            <person name="Galle R.F."/>
            <person name="George R.A."/>
            <person name="Lewis S.E."/>
            <person name="Richards S."/>
            <person name="Ashburner M."/>
            <person name="Henderson S.N."/>
            <person name="Sutton G.G."/>
            <person name="Wortman J.R."/>
            <person name="Yandell M.D."/>
            <person name="Zhang Q."/>
            <person name="Chen L.X."/>
            <person name="Brandon R.C."/>
            <person name="Rogers Y.-H.C."/>
            <person name="Blazej R.G."/>
            <person name="Champe M."/>
            <person name="Pfeiffer B.D."/>
            <person name="Wan K.H."/>
            <person name="Doyle C."/>
            <person name="Baxter E.G."/>
            <person name="Helt G."/>
            <person name="Nelson C.R."/>
            <person name="Miklos G.L.G."/>
            <person name="Abril J.F."/>
            <person name="Agbayani A."/>
            <person name="An H.-J."/>
            <person name="Andrews-Pfannkoch C."/>
            <person name="Baldwin D."/>
            <person name="Ballew R.M."/>
            <person name="Basu A."/>
            <person name="Baxendale J."/>
            <person name="Bayraktaroglu L."/>
            <person name="Beasley E.M."/>
            <person name="Beeson K.Y."/>
            <person name="Benos P.V."/>
            <person name="Berman B.P."/>
            <person name="Bhandari D."/>
            <person name="Bolshakov S."/>
            <person name="Borkova D."/>
            <person name="Botchan M.R."/>
            <person name="Bouck J."/>
            <person name="Brokstein P."/>
            <person name="Brottier P."/>
            <person name="Burtis K.C."/>
            <person name="Busam D.A."/>
            <person name="Butler H."/>
            <person name="Cadieu E."/>
            <person name="Center A."/>
            <person name="Chandra I."/>
            <person name="Cherry J.M."/>
            <person name="Cawley S."/>
            <person name="Dahlke C."/>
            <person name="Davenport L.B."/>
            <person name="Davies P."/>
            <person name="de Pablos B."/>
            <person name="Delcher A."/>
            <person name="Deng Z."/>
            <person name="Mays A.D."/>
            <person name="Dew I."/>
            <person name="Dietz S.M."/>
            <person name="Dodson K."/>
            <person name="Doup L.E."/>
            <person name="Downes M."/>
            <person name="Dugan-Rocha S."/>
            <person name="Dunkov B.C."/>
            <person name="Dunn P."/>
            <person name="Durbin K.J."/>
            <person name="Evangelista C.C."/>
            <person name="Ferraz C."/>
            <person name="Ferriera S."/>
            <person name="Fleischmann W."/>
            <person name="Fosler C."/>
            <person name="Gabrielian A.E."/>
            <person name="Garg N.S."/>
            <person name="Gelbart W.M."/>
            <person name="Glasser K."/>
            <person name="Glodek A."/>
            <person name="Gong F."/>
            <person name="Gorrell J.H."/>
            <person name="Gu Z."/>
            <person name="Guan P."/>
            <person name="Harris M."/>
            <person name="Harris N.L."/>
            <person name="Harvey D.A."/>
            <person name="Heiman T.J."/>
            <person name="Hernandez J.R."/>
            <person name="Houck J."/>
            <person name="Hostin D."/>
            <person name="Houston K.A."/>
            <person name="Howland T.J."/>
            <person name="Wei M.-H."/>
            <person name="Ibegwam C."/>
            <person name="Jalali M."/>
            <person name="Kalush F."/>
            <person name="Karpen G.H."/>
            <person name="Ke Z."/>
            <person name="Kennison J.A."/>
            <person name="Ketchum K.A."/>
            <person name="Kimmel B.E."/>
            <person name="Kodira C.D."/>
            <person name="Kraft C.L."/>
            <person name="Kravitz S."/>
            <person name="Kulp D."/>
            <person name="Lai Z."/>
            <person name="Lasko P."/>
            <person name="Lei Y."/>
            <person name="Levitsky A.A."/>
            <person name="Li J.H."/>
            <person name="Li Z."/>
            <person name="Liang Y."/>
            <person name="Lin X."/>
            <person name="Liu X."/>
            <person name="Mattei B."/>
            <person name="McIntosh T.C."/>
            <person name="McLeod M.P."/>
            <person name="McPherson D."/>
            <person name="Merkulov G."/>
            <person name="Milshina N.V."/>
            <person name="Mobarry C."/>
            <person name="Morris J."/>
            <person name="Moshrefi A."/>
            <person name="Mount S.M."/>
            <person name="Moy M."/>
            <person name="Murphy B."/>
            <person name="Murphy L."/>
            <person name="Muzny D.M."/>
            <person name="Nelson D.L."/>
            <person name="Nelson D.R."/>
            <person name="Nelson K.A."/>
            <person name="Nixon K."/>
            <person name="Nusskern D.R."/>
            <person name="Pacleb J.M."/>
            <person name="Palazzolo M."/>
            <person name="Pittman G.S."/>
            <person name="Pan S."/>
            <person name="Pollard J."/>
            <person name="Puri V."/>
            <person name="Reese M.G."/>
            <person name="Reinert K."/>
            <person name="Remington K."/>
            <person name="Saunders R.D.C."/>
            <person name="Scheeler F."/>
            <person name="Shen H."/>
            <person name="Shue B.C."/>
            <person name="Siden-Kiamos I."/>
            <person name="Simpson M."/>
            <person name="Skupski M.P."/>
            <person name="Smith T.J."/>
            <person name="Spier E."/>
            <person name="Spradling A.C."/>
            <person name="Stapleton M."/>
            <person name="Strong R."/>
            <person name="Sun E."/>
            <person name="Svirskas R."/>
            <person name="Tector C."/>
            <person name="Turner R."/>
            <person name="Venter E."/>
            <person name="Wang A.H."/>
            <person name="Wang X."/>
            <person name="Wang Z.-Y."/>
            <person name="Wassarman D.A."/>
            <person name="Weinstock G.M."/>
            <person name="Weissenbach J."/>
            <person name="Williams S.M."/>
            <person name="Woodage T."/>
            <person name="Worley K.C."/>
            <person name="Wu D."/>
            <person name="Yang S."/>
            <person name="Yao Q.A."/>
            <person name="Ye J."/>
            <person name="Yeh R.-F."/>
            <person name="Zaveri J.S."/>
            <person name="Zhan M."/>
            <person name="Zhang G."/>
            <person name="Zhao Q."/>
            <person name="Zheng L."/>
            <person name="Zheng X.H."/>
            <person name="Zhong F.N."/>
            <person name="Zhong W."/>
            <person name="Zhou X."/>
            <person name="Zhu S.C."/>
            <person name="Zhu X."/>
            <person name="Smith H.O."/>
            <person name="Gibbs R.A."/>
            <person name="Myers E.W."/>
            <person name="Rubin G.M."/>
            <person name="Venter J.C."/>
        </authorList>
    </citation>
    <scope>NUCLEOTIDE SEQUENCE [LARGE SCALE GENOMIC DNA]</scope>
    <source>
        <strain>Berkeley</strain>
    </source>
</reference>
<reference key="4">
    <citation type="journal article" date="2002" name="Genome Biol.">
        <title>Annotation of the Drosophila melanogaster euchromatic genome: a systematic review.</title>
        <authorList>
            <person name="Misra S."/>
            <person name="Crosby M.A."/>
            <person name="Mungall C.J."/>
            <person name="Matthews B.B."/>
            <person name="Campbell K.S."/>
            <person name="Hradecky P."/>
            <person name="Huang Y."/>
            <person name="Kaminker J.S."/>
            <person name="Millburn G.H."/>
            <person name="Prochnik S.E."/>
            <person name="Smith C.D."/>
            <person name="Tupy J.L."/>
            <person name="Whitfield E.J."/>
            <person name="Bayraktaroglu L."/>
            <person name="Berman B.P."/>
            <person name="Bettencourt B.R."/>
            <person name="Celniker S.E."/>
            <person name="de Grey A.D.N.J."/>
            <person name="Drysdale R.A."/>
            <person name="Harris N.L."/>
            <person name="Richter J."/>
            <person name="Russo S."/>
            <person name="Schroeder A.J."/>
            <person name="Shu S.Q."/>
            <person name="Stapleton M."/>
            <person name="Yamada C."/>
            <person name="Ashburner M."/>
            <person name="Gelbart W.M."/>
            <person name="Rubin G.M."/>
            <person name="Lewis S.E."/>
        </authorList>
    </citation>
    <scope>GENOME REANNOTATION</scope>
    <source>
        <strain>Berkeley</strain>
    </source>
</reference>
<reference key="5">
    <citation type="submission" date="2007-11" db="EMBL/GenBank/DDBJ databases">
        <authorList>
            <person name="Stapleton M."/>
            <person name="Carlson J.W."/>
            <person name="Frise E."/>
            <person name="Kapadia B."/>
            <person name="Park S."/>
            <person name="Wan K.H."/>
            <person name="Yu C."/>
            <person name="Celniker S.E."/>
        </authorList>
    </citation>
    <scope>NUCLEOTIDE SEQUENCE [LARGE SCALE MRNA]</scope>
    <source>
        <strain>Berkeley</strain>
        <tissue>Larva</tissue>
        <tissue>Pupae</tissue>
    </source>
</reference>
<evidence type="ECO:0000255" key="1"/>
<evidence type="ECO:0000255" key="2">
    <source>
        <dbReference type="PROSITE-ProRule" id="PRU00497"/>
    </source>
</evidence>
<evidence type="ECO:0000256" key="3">
    <source>
        <dbReference type="SAM" id="MobiDB-lite"/>
    </source>
</evidence>
<evidence type="ECO:0000305" key="4"/>
<dbReference type="EMBL" id="J02527">
    <property type="protein sequence ID" value="AAA28564.1"/>
    <property type="molecule type" value="Genomic_DNA"/>
</dbReference>
<dbReference type="EMBL" id="AE014134">
    <property type="protein sequence ID" value="AAF52475.1"/>
    <property type="molecule type" value="Genomic_DNA"/>
</dbReference>
<dbReference type="EMBL" id="BT031148">
    <property type="protein sequence ID" value="ABX00770.1"/>
    <property type="status" value="ALT_INIT"/>
    <property type="molecule type" value="mRNA"/>
</dbReference>
<dbReference type="PIR" id="B24787">
    <property type="entry name" value="UCFFPM"/>
</dbReference>
<dbReference type="RefSeq" id="NP_476673.1">
    <property type="nucleotide sequence ID" value="NM_057325.3"/>
</dbReference>
<dbReference type="FunCoup" id="P14484">
    <property type="interactions" value="36"/>
</dbReference>
<dbReference type="STRING" id="7227.FBpp0079016"/>
<dbReference type="PaxDb" id="7227-FBpp0079016"/>
<dbReference type="DNASU" id="33985"/>
<dbReference type="EnsemblMetazoa" id="FBtr0079388">
    <property type="protein sequence ID" value="FBpp0079016"/>
    <property type="gene ID" value="FBgn0003046"/>
</dbReference>
<dbReference type="GeneID" id="33985"/>
<dbReference type="KEGG" id="dme:Dmel_CG3440"/>
<dbReference type="AGR" id="FB:FBgn0003046"/>
<dbReference type="CTD" id="18543"/>
<dbReference type="FlyBase" id="FBgn0003046">
    <property type="gene designation" value="Pcp"/>
</dbReference>
<dbReference type="VEuPathDB" id="VectorBase:FBgn0003046"/>
<dbReference type="eggNOG" id="ENOG502T8G8">
    <property type="taxonomic scope" value="Eukaryota"/>
</dbReference>
<dbReference type="GeneTree" id="ENSGT00900000141325"/>
<dbReference type="HOGENOM" id="CLU_065450_0_0_1"/>
<dbReference type="InParanoid" id="P14484"/>
<dbReference type="OMA" id="RTHPYQI"/>
<dbReference type="OrthoDB" id="7920766at2759"/>
<dbReference type="PhylomeDB" id="P14484"/>
<dbReference type="BioGRID-ORCS" id="33985">
    <property type="hits" value="0 hits in 1 CRISPR screen"/>
</dbReference>
<dbReference type="GenomeRNAi" id="33985"/>
<dbReference type="PRO" id="PR:P14484"/>
<dbReference type="Proteomes" id="UP000000803">
    <property type="component" value="Chromosome 2L"/>
</dbReference>
<dbReference type="Bgee" id="FBgn0003046">
    <property type="expression patterns" value="Expressed in saliva-secreting gland and 18 other cell types or tissues"/>
</dbReference>
<dbReference type="GO" id="GO:0062129">
    <property type="term" value="C:chitin-based extracellular matrix"/>
    <property type="evidence" value="ECO:0000255"/>
    <property type="project" value="FlyBase"/>
</dbReference>
<dbReference type="GO" id="GO:0008010">
    <property type="term" value="F:structural constituent of chitin-based larval cuticle"/>
    <property type="evidence" value="ECO:0000255"/>
    <property type="project" value="FlyBase"/>
</dbReference>
<dbReference type="GO" id="GO:0008011">
    <property type="term" value="F:structural constituent of pupal chitin-based cuticle"/>
    <property type="evidence" value="ECO:0000250"/>
    <property type="project" value="FlyBase"/>
</dbReference>
<dbReference type="GO" id="GO:0040003">
    <property type="term" value="P:chitin-based cuticle development"/>
    <property type="evidence" value="ECO:0000255"/>
    <property type="project" value="FlyBase"/>
</dbReference>
<dbReference type="GO" id="GO:0046529">
    <property type="term" value="P:imaginal disc fusion, thorax closure"/>
    <property type="evidence" value="ECO:0000315"/>
    <property type="project" value="FlyBase"/>
</dbReference>
<dbReference type="InterPro" id="IPR031311">
    <property type="entry name" value="CHIT_BIND_RR_consensus"/>
</dbReference>
<dbReference type="InterPro" id="IPR050468">
    <property type="entry name" value="Cuticle_Struct_Prot"/>
</dbReference>
<dbReference type="InterPro" id="IPR000618">
    <property type="entry name" value="Insect_cuticle"/>
</dbReference>
<dbReference type="PANTHER" id="PTHR10380">
    <property type="entry name" value="CUTICLE PROTEIN"/>
    <property type="match status" value="1"/>
</dbReference>
<dbReference type="PANTHER" id="PTHR10380:SF237">
    <property type="entry name" value="CUTICULAR PROTEIN 65AU, ISOFORM A-RELATED"/>
    <property type="match status" value="1"/>
</dbReference>
<dbReference type="Pfam" id="PF00379">
    <property type="entry name" value="Chitin_bind_4"/>
    <property type="match status" value="1"/>
</dbReference>
<dbReference type="PRINTS" id="PR00947">
    <property type="entry name" value="CUTICLE"/>
</dbReference>
<dbReference type="PROSITE" id="PS00233">
    <property type="entry name" value="CHIT_BIND_RR_1"/>
    <property type="match status" value="1"/>
</dbReference>
<dbReference type="PROSITE" id="PS51155">
    <property type="entry name" value="CHIT_BIND_RR_2"/>
    <property type="match status" value="1"/>
</dbReference>
<keyword id="KW-0193">Cuticle</keyword>
<keyword id="KW-1185">Reference proteome</keyword>
<keyword id="KW-0732">Signal</keyword>
<name>CUPP_DROME</name>
<accession>P14484</accession>
<accession>A8WHK2</accession>
<accession>Q9VM52</accession>
<protein>
    <recommendedName>
        <fullName>Pupal cuticle protein</fullName>
    </recommendedName>
</protein>
<sequence length="184" mass="20633">MYLLVNFIVALAVLQVQAGSSYIPDSDRNTRTLQNDLQVERDGKYRYAYETSNGISASQEGLGGVAVQGGSSYTSPEGEVISVNYVADEFGYHPVGAHIPQVPDYILRSLEYIRTHPYQIKDYYTGELKTVEHDAAAFNVYTRNIQDHTIPQSRPSTTPKTIYLTHPPTTTSRPLRQRRALPTH</sequence>
<feature type="signal peptide" evidence="1">
    <location>
        <begin position="1"/>
        <end position="15"/>
    </location>
</feature>
<feature type="chain" id="PRO_0000006397" description="Pupal cuticle protein">
    <location>
        <begin position="16"/>
        <end position="184"/>
    </location>
</feature>
<feature type="domain" description="Chitin-binding type R&amp;R" evidence="2">
    <location>
        <begin position="42"/>
        <end position="103"/>
    </location>
</feature>
<feature type="region of interest" description="Disordered" evidence="3">
    <location>
        <begin position="147"/>
        <end position="184"/>
    </location>
</feature>
<feature type="compositionally biased region" description="Polar residues" evidence="3">
    <location>
        <begin position="147"/>
        <end position="160"/>
    </location>
</feature>
<feature type="compositionally biased region" description="Basic residues" evidence="3">
    <location>
        <begin position="175"/>
        <end position="184"/>
    </location>
</feature>
<feature type="sequence conflict" description="In Ref. 1; AAA28564." evidence="4" ref="1">
    <original>L</original>
    <variation>LQ</variation>
    <location>
        <position position="4"/>
    </location>
</feature>
<comment type="function">
    <text>Component of the cuticle of the pupa of fruit fly.</text>
</comment>
<comment type="developmental stage">
    <text>Expressed throughout both the fourth and the fifth larval instars.</text>
</comment>
<comment type="sequence caution" evidence="4">
    <conflict type="erroneous initiation">
        <sequence resource="EMBL-CDS" id="ABX00770"/>
    </conflict>
</comment>
<proteinExistence type="evidence at transcript level"/>
<gene>
    <name type="primary">Pcp</name>
    <name type="ORF">CG3440</name>
</gene>